<sequence length="192" mass="20895">MITISETAQAHFVKLLSDQPEGTHIRVFVISPGTAQAECGVSYCPPDAVEADDTEFEFNGFNAMVDEKSAPFLEEATIDFVTDQLGSQLTLKAPNAKMRKVSDDASLSERIEYVIQSEINPQLASHGGNIMLVEITEEGIAVLQFGGGCNGCSMVDVTLKDGIEKQLLEMFPSELTGVKDVTEHQHGEHSYQ</sequence>
<gene>
    <name evidence="1" type="primary">nfuA</name>
    <name type="ordered locus">Shal_0247</name>
</gene>
<organism>
    <name type="scientific">Shewanella halifaxensis (strain HAW-EB4)</name>
    <dbReference type="NCBI Taxonomy" id="458817"/>
    <lineage>
        <taxon>Bacteria</taxon>
        <taxon>Pseudomonadati</taxon>
        <taxon>Pseudomonadota</taxon>
        <taxon>Gammaproteobacteria</taxon>
        <taxon>Alteromonadales</taxon>
        <taxon>Shewanellaceae</taxon>
        <taxon>Shewanella</taxon>
    </lineage>
</organism>
<dbReference type="EMBL" id="CP000931">
    <property type="protein sequence ID" value="ABZ74823.1"/>
    <property type="molecule type" value="Genomic_DNA"/>
</dbReference>
<dbReference type="RefSeq" id="WP_012275378.1">
    <property type="nucleotide sequence ID" value="NC_010334.1"/>
</dbReference>
<dbReference type="SMR" id="B0TNS0"/>
<dbReference type="STRING" id="458817.Shal_0247"/>
<dbReference type="KEGG" id="shl:Shal_0247"/>
<dbReference type="eggNOG" id="COG0316">
    <property type="taxonomic scope" value="Bacteria"/>
</dbReference>
<dbReference type="eggNOG" id="COG0694">
    <property type="taxonomic scope" value="Bacteria"/>
</dbReference>
<dbReference type="HOGENOM" id="CLU_094569_0_0_6"/>
<dbReference type="OrthoDB" id="9785450at2"/>
<dbReference type="Proteomes" id="UP000001317">
    <property type="component" value="Chromosome"/>
</dbReference>
<dbReference type="GO" id="GO:0051539">
    <property type="term" value="F:4 iron, 4 sulfur cluster binding"/>
    <property type="evidence" value="ECO:0007669"/>
    <property type="project" value="UniProtKB-UniRule"/>
</dbReference>
<dbReference type="GO" id="GO:0005506">
    <property type="term" value="F:iron ion binding"/>
    <property type="evidence" value="ECO:0007669"/>
    <property type="project" value="InterPro"/>
</dbReference>
<dbReference type="GO" id="GO:0016226">
    <property type="term" value="P:iron-sulfur cluster assembly"/>
    <property type="evidence" value="ECO:0007669"/>
    <property type="project" value="UniProtKB-UniRule"/>
</dbReference>
<dbReference type="GO" id="GO:0051604">
    <property type="term" value="P:protein maturation"/>
    <property type="evidence" value="ECO:0007669"/>
    <property type="project" value="UniProtKB-UniRule"/>
</dbReference>
<dbReference type="Gene3D" id="3.30.300.130">
    <property type="entry name" value="Fe-S cluster assembly (FSCA)"/>
    <property type="match status" value="1"/>
</dbReference>
<dbReference type="Gene3D" id="2.60.300.12">
    <property type="entry name" value="HesB-like domain"/>
    <property type="match status" value="1"/>
</dbReference>
<dbReference type="HAMAP" id="MF_01637">
    <property type="entry name" value="Fe_S_biogen_NfuA"/>
    <property type="match status" value="1"/>
</dbReference>
<dbReference type="InterPro" id="IPR017726">
    <property type="entry name" value="Fe/S_biogenesis_protein_NfuA"/>
</dbReference>
<dbReference type="InterPro" id="IPR000361">
    <property type="entry name" value="FeS_biogenesis"/>
</dbReference>
<dbReference type="InterPro" id="IPR034904">
    <property type="entry name" value="FSCA_dom_sf"/>
</dbReference>
<dbReference type="InterPro" id="IPR035903">
    <property type="entry name" value="HesB-like_dom_sf"/>
</dbReference>
<dbReference type="InterPro" id="IPR001075">
    <property type="entry name" value="NIF_FeS_clus_asmbl_NifU_C"/>
</dbReference>
<dbReference type="NCBIfam" id="NF008392">
    <property type="entry name" value="PRK11190.1"/>
    <property type="match status" value="1"/>
</dbReference>
<dbReference type="NCBIfam" id="TIGR03341">
    <property type="entry name" value="YhgI_GntY"/>
    <property type="match status" value="1"/>
</dbReference>
<dbReference type="PANTHER" id="PTHR11178:SF51">
    <property type="entry name" value="FE_S BIOGENESIS PROTEIN NFUA"/>
    <property type="match status" value="1"/>
</dbReference>
<dbReference type="PANTHER" id="PTHR11178">
    <property type="entry name" value="IRON-SULFUR CLUSTER SCAFFOLD PROTEIN NFU-RELATED"/>
    <property type="match status" value="1"/>
</dbReference>
<dbReference type="Pfam" id="PF01521">
    <property type="entry name" value="Fe-S_biosyn"/>
    <property type="match status" value="1"/>
</dbReference>
<dbReference type="Pfam" id="PF01106">
    <property type="entry name" value="NifU"/>
    <property type="match status" value="1"/>
</dbReference>
<dbReference type="SUPFAM" id="SSF117916">
    <property type="entry name" value="Fe-S cluster assembly (FSCA) domain-like"/>
    <property type="match status" value="1"/>
</dbReference>
<dbReference type="SUPFAM" id="SSF89360">
    <property type="entry name" value="HesB-like domain"/>
    <property type="match status" value="1"/>
</dbReference>
<reference key="1">
    <citation type="submission" date="2008-01" db="EMBL/GenBank/DDBJ databases">
        <title>Complete sequence of Shewanella halifaxensis HAW-EB4.</title>
        <authorList>
            <consortium name="US DOE Joint Genome Institute"/>
            <person name="Copeland A."/>
            <person name="Lucas S."/>
            <person name="Lapidus A."/>
            <person name="Glavina del Rio T."/>
            <person name="Dalin E."/>
            <person name="Tice H."/>
            <person name="Bruce D."/>
            <person name="Goodwin L."/>
            <person name="Pitluck S."/>
            <person name="Sims D."/>
            <person name="Brettin T."/>
            <person name="Detter J.C."/>
            <person name="Han C."/>
            <person name="Kuske C.R."/>
            <person name="Schmutz J."/>
            <person name="Larimer F."/>
            <person name="Land M."/>
            <person name="Hauser L."/>
            <person name="Kyrpides N."/>
            <person name="Kim E."/>
            <person name="Zhao J.-S."/>
            <person name="Richardson P."/>
        </authorList>
    </citation>
    <scope>NUCLEOTIDE SEQUENCE [LARGE SCALE GENOMIC DNA]</scope>
    <source>
        <strain>HAW-EB4</strain>
    </source>
</reference>
<evidence type="ECO:0000255" key="1">
    <source>
        <dbReference type="HAMAP-Rule" id="MF_01637"/>
    </source>
</evidence>
<proteinExistence type="inferred from homology"/>
<keyword id="KW-0004">4Fe-4S</keyword>
<keyword id="KW-0408">Iron</keyword>
<keyword id="KW-0411">Iron-sulfur</keyword>
<keyword id="KW-0479">Metal-binding</keyword>
<feature type="chain" id="PRO_1000088200" description="Fe/S biogenesis protein NfuA">
    <location>
        <begin position="1"/>
        <end position="192"/>
    </location>
</feature>
<feature type="binding site" evidence="1">
    <location>
        <position position="149"/>
    </location>
    <ligand>
        <name>[4Fe-4S] cluster</name>
        <dbReference type="ChEBI" id="CHEBI:49883"/>
    </ligand>
</feature>
<feature type="binding site" evidence="1">
    <location>
        <position position="152"/>
    </location>
    <ligand>
        <name>[4Fe-4S] cluster</name>
        <dbReference type="ChEBI" id="CHEBI:49883"/>
    </ligand>
</feature>
<accession>B0TNS0</accession>
<comment type="function">
    <text evidence="1">Involved in iron-sulfur cluster biogenesis. Binds a 4Fe-4S cluster, can transfer this cluster to apoproteins, and thereby intervenes in the maturation of Fe/S proteins. Could also act as a scaffold/chaperone for damaged Fe/S proteins.</text>
</comment>
<comment type="cofactor">
    <cofactor evidence="1">
        <name>[4Fe-4S] cluster</name>
        <dbReference type="ChEBI" id="CHEBI:49883"/>
    </cofactor>
    <text evidence="1">Binds 1 [4Fe-4S] cluster per subunit. The cluster is presumably bound at the interface of two monomers.</text>
</comment>
<comment type="subunit">
    <text evidence="1">Homodimer.</text>
</comment>
<comment type="similarity">
    <text evidence="1">Belongs to the NfuA family.</text>
</comment>
<name>NFUA_SHEHH</name>
<protein>
    <recommendedName>
        <fullName evidence="1">Fe/S biogenesis protein NfuA</fullName>
    </recommendedName>
</protein>